<gene>
    <name evidence="1" type="primary">psd</name>
    <name type="ordered locus">blr3796</name>
</gene>
<name>PSD_BRADU</name>
<comment type="function">
    <text evidence="1">Catalyzes the formation of phosphatidylethanolamine (PtdEtn) from phosphatidylserine (PtdSer).</text>
</comment>
<comment type="catalytic activity">
    <reaction evidence="1">
        <text>a 1,2-diacyl-sn-glycero-3-phospho-L-serine + H(+) = a 1,2-diacyl-sn-glycero-3-phosphoethanolamine + CO2</text>
        <dbReference type="Rhea" id="RHEA:20828"/>
        <dbReference type="ChEBI" id="CHEBI:15378"/>
        <dbReference type="ChEBI" id="CHEBI:16526"/>
        <dbReference type="ChEBI" id="CHEBI:57262"/>
        <dbReference type="ChEBI" id="CHEBI:64612"/>
        <dbReference type="EC" id="4.1.1.65"/>
    </reaction>
</comment>
<comment type="cofactor">
    <cofactor evidence="1">
        <name>pyruvate</name>
        <dbReference type="ChEBI" id="CHEBI:15361"/>
    </cofactor>
    <text evidence="1">Binds 1 pyruvoyl group covalently per subunit.</text>
</comment>
<comment type="pathway">
    <text evidence="1">Phospholipid metabolism; phosphatidylethanolamine biosynthesis; phosphatidylethanolamine from CDP-diacylglycerol: step 2/2.</text>
</comment>
<comment type="subunit">
    <text evidence="1">Heterodimer of a large membrane-associated beta subunit and a small pyruvoyl-containing alpha subunit.</text>
</comment>
<comment type="subcellular location">
    <subcellularLocation>
        <location evidence="1">Cell membrane</location>
        <topology evidence="1">Peripheral membrane protein</topology>
    </subcellularLocation>
</comment>
<comment type="PTM">
    <text evidence="1">Is synthesized initially as an inactive proenzyme. Formation of the active enzyme involves a self-maturation process in which the active site pyruvoyl group is generated from an internal serine residue via an autocatalytic post-translational modification. Two non-identical subunits are generated from the proenzyme in this reaction, and the pyruvate is formed at the N-terminus of the alpha chain, which is derived from the carboxyl end of the proenzyme. The post-translation cleavage follows an unusual pathway, termed non-hydrolytic serinolysis, in which the side chain hydroxyl group of the serine supplies its oxygen atom to form the C-terminus of the beta chain, while the remainder of the serine residue undergoes an oxidative deamination to produce ammonia and the pyruvoyl prosthetic group on the alpha chain.</text>
</comment>
<comment type="similarity">
    <text evidence="1">Belongs to the phosphatidylserine decarboxylase family. PSD-A subfamily.</text>
</comment>
<proteinExistence type="inferred from homology"/>
<sequence length="232" mass="25240">MSILDSIQRQIPPIHKEGYPFIGGFALASLILFWLWSPLGWIGTILTVWCALFFRDPVRVTPVREGLVVSPADGRVSMITMALPPAELGLGDRPLPRISVFMSVFNCHVNRSPIAGRVDRIAYRPGLFINAELDKASEDNERNSLVITTPTARIGVVQIAGLIAKRIVCFVREGQAIGAGERFGLIRFGSRLDVYLPVGTKALVSEGQTAIAGETILADLAGDDPSRAYRAN</sequence>
<organism>
    <name type="scientific">Bradyrhizobium diazoefficiens (strain JCM 10833 / BCRC 13528 / IAM 13628 / NBRC 14792 / USDA 110)</name>
    <dbReference type="NCBI Taxonomy" id="224911"/>
    <lineage>
        <taxon>Bacteria</taxon>
        <taxon>Pseudomonadati</taxon>
        <taxon>Pseudomonadota</taxon>
        <taxon>Alphaproteobacteria</taxon>
        <taxon>Hyphomicrobiales</taxon>
        <taxon>Nitrobacteraceae</taxon>
        <taxon>Bradyrhizobium</taxon>
    </lineage>
</organism>
<protein>
    <recommendedName>
        <fullName evidence="1">Phosphatidylserine decarboxylase proenzyme</fullName>
        <ecNumber evidence="1">4.1.1.65</ecNumber>
    </recommendedName>
    <component>
        <recommendedName>
            <fullName evidence="1">Phosphatidylserine decarboxylase alpha chain</fullName>
        </recommendedName>
    </component>
    <component>
        <recommendedName>
            <fullName evidence="1">Phosphatidylserine decarboxylase beta chain</fullName>
        </recommendedName>
    </component>
</protein>
<feature type="chain" id="PRO_0000029757" description="Phosphatidylserine decarboxylase beta chain" evidence="1">
    <location>
        <begin position="1"/>
        <end position="189"/>
    </location>
</feature>
<feature type="chain" id="PRO_0000029758" description="Phosphatidylserine decarboxylase alpha chain" evidence="1">
    <location>
        <begin position="190"/>
        <end position="232"/>
    </location>
</feature>
<feature type="active site" description="Schiff-base intermediate with substrate; via pyruvic acid" evidence="1">
    <location>
        <position position="190"/>
    </location>
</feature>
<feature type="site" description="Cleavage (non-hydrolytic); by autocatalysis" evidence="1">
    <location>
        <begin position="189"/>
        <end position="190"/>
    </location>
</feature>
<feature type="modified residue" description="Pyruvic acid (Ser); by autocatalysis" evidence="1">
    <location>
        <position position="190"/>
    </location>
</feature>
<reference key="1">
    <citation type="journal article" date="2002" name="DNA Res.">
        <title>Complete genomic sequence of nitrogen-fixing symbiotic bacterium Bradyrhizobium japonicum USDA110.</title>
        <authorList>
            <person name="Kaneko T."/>
            <person name="Nakamura Y."/>
            <person name="Sato S."/>
            <person name="Minamisawa K."/>
            <person name="Uchiumi T."/>
            <person name="Sasamoto S."/>
            <person name="Watanabe A."/>
            <person name="Idesawa K."/>
            <person name="Iriguchi M."/>
            <person name="Kawashima K."/>
            <person name="Kohara M."/>
            <person name="Matsumoto M."/>
            <person name="Shimpo S."/>
            <person name="Tsuruoka H."/>
            <person name="Wada T."/>
            <person name="Yamada M."/>
            <person name="Tabata S."/>
        </authorList>
    </citation>
    <scope>NUCLEOTIDE SEQUENCE [LARGE SCALE GENOMIC DNA]</scope>
    <source>
        <strain>JCM 10833 / BCRC 13528 / IAM 13628 / NBRC 14792 / USDA 110</strain>
    </source>
</reference>
<dbReference type="EC" id="4.1.1.65" evidence="1"/>
<dbReference type="EMBL" id="BA000040">
    <property type="protein sequence ID" value="BAC49061.1"/>
    <property type="molecule type" value="Genomic_DNA"/>
</dbReference>
<dbReference type="RefSeq" id="NP_770436.1">
    <property type="nucleotide sequence ID" value="NC_004463.1"/>
</dbReference>
<dbReference type="STRING" id="224911.AAV28_15960"/>
<dbReference type="EnsemblBacteria" id="BAC49061">
    <property type="protein sequence ID" value="BAC49061"/>
    <property type="gene ID" value="BAC49061"/>
</dbReference>
<dbReference type="KEGG" id="bja:blr3796"/>
<dbReference type="PATRIC" id="fig|224911.44.peg.3466"/>
<dbReference type="eggNOG" id="COG0688">
    <property type="taxonomic scope" value="Bacteria"/>
</dbReference>
<dbReference type="HOGENOM" id="CLU_072492_0_0_5"/>
<dbReference type="InParanoid" id="Q89NP2"/>
<dbReference type="OrthoDB" id="9790893at2"/>
<dbReference type="PhylomeDB" id="Q89NP2"/>
<dbReference type="UniPathway" id="UPA00558">
    <property type="reaction ID" value="UER00616"/>
</dbReference>
<dbReference type="Proteomes" id="UP000002526">
    <property type="component" value="Chromosome"/>
</dbReference>
<dbReference type="GO" id="GO:0005886">
    <property type="term" value="C:plasma membrane"/>
    <property type="evidence" value="ECO:0007669"/>
    <property type="project" value="UniProtKB-SubCell"/>
</dbReference>
<dbReference type="GO" id="GO:0004609">
    <property type="term" value="F:phosphatidylserine decarboxylase activity"/>
    <property type="evidence" value="ECO:0007669"/>
    <property type="project" value="UniProtKB-UniRule"/>
</dbReference>
<dbReference type="GO" id="GO:0006646">
    <property type="term" value="P:phosphatidylethanolamine biosynthetic process"/>
    <property type="evidence" value="ECO:0007669"/>
    <property type="project" value="UniProtKB-UniRule"/>
</dbReference>
<dbReference type="HAMAP" id="MF_00664">
    <property type="entry name" value="PS_decarb_PSD_A"/>
    <property type="match status" value="1"/>
</dbReference>
<dbReference type="InterPro" id="IPR003817">
    <property type="entry name" value="PS_Dcarbxylase"/>
</dbReference>
<dbReference type="InterPro" id="IPR033175">
    <property type="entry name" value="PSD-A"/>
</dbReference>
<dbReference type="NCBIfam" id="NF003677">
    <property type="entry name" value="PRK05305.1-1"/>
    <property type="match status" value="1"/>
</dbReference>
<dbReference type="NCBIfam" id="NF003678">
    <property type="entry name" value="PRK05305.1-2"/>
    <property type="match status" value="1"/>
</dbReference>
<dbReference type="NCBIfam" id="NF003679">
    <property type="entry name" value="PRK05305.1-3"/>
    <property type="match status" value="1"/>
</dbReference>
<dbReference type="NCBIfam" id="NF003685">
    <property type="entry name" value="PRK05305.2-5"/>
    <property type="match status" value="1"/>
</dbReference>
<dbReference type="PANTHER" id="PTHR35809">
    <property type="entry name" value="ARCHAETIDYLSERINE DECARBOXYLASE PROENZYME-RELATED"/>
    <property type="match status" value="1"/>
</dbReference>
<dbReference type="PANTHER" id="PTHR35809:SF1">
    <property type="entry name" value="ARCHAETIDYLSERINE DECARBOXYLASE PROENZYME-RELATED"/>
    <property type="match status" value="1"/>
</dbReference>
<dbReference type="Pfam" id="PF02666">
    <property type="entry name" value="PS_Dcarbxylase"/>
    <property type="match status" value="1"/>
</dbReference>
<keyword id="KW-1003">Cell membrane</keyword>
<keyword id="KW-0210">Decarboxylase</keyword>
<keyword id="KW-0444">Lipid biosynthesis</keyword>
<keyword id="KW-0443">Lipid metabolism</keyword>
<keyword id="KW-0456">Lyase</keyword>
<keyword id="KW-0472">Membrane</keyword>
<keyword id="KW-0594">Phospholipid biosynthesis</keyword>
<keyword id="KW-1208">Phospholipid metabolism</keyword>
<keyword id="KW-0670">Pyruvate</keyword>
<keyword id="KW-1185">Reference proteome</keyword>
<keyword id="KW-0865">Zymogen</keyword>
<accession>Q89NP2</accession>
<evidence type="ECO:0000255" key="1">
    <source>
        <dbReference type="HAMAP-Rule" id="MF_00664"/>
    </source>
</evidence>